<dbReference type="EMBL" id="M87647">
    <property type="protein sequence ID" value="AAA73201.1"/>
    <property type="molecule type" value="Genomic_DNA"/>
</dbReference>
<dbReference type="EMBL" id="CP001982">
    <property type="protein sequence ID" value="ADF41839.1"/>
    <property type="molecule type" value="Genomic_DNA"/>
</dbReference>
<dbReference type="PIR" id="JQ1952">
    <property type="entry name" value="JQ1952"/>
</dbReference>
<dbReference type="RefSeq" id="WP_013085386.1">
    <property type="nucleotide sequence ID" value="NZ_CP120609.1"/>
</dbReference>
<dbReference type="SMR" id="P35168"/>
<dbReference type="KEGG" id="bmd:BMD_5039"/>
<dbReference type="HOGENOM" id="CLU_054506_2_0_9"/>
<dbReference type="Proteomes" id="UP000002365">
    <property type="component" value="Chromosome"/>
</dbReference>
<dbReference type="GO" id="GO:0030246">
    <property type="term" value="F:carbohydrate binding"/>
    <property type="evidence" value="ECO:0007669"/>
    <property type="project" value="InterPro"/>
</dbReference>
<dbReference type="GO" id="GO:0003677">
    <property type="term" value="F:DNA binding"/>
    <property type="evidence" value="ECO:0007669"/>
    <property type="project" value="UniProtKB-KW"/>
</dbReference>
<dbReference type="Gene3D" id="3.40.50.1360">
    <property type="match status" value="1"/>
</dbReference>
<dbReference type="Gene3D" id="1.10.10.10">
    <property type="entry name" value="Winged helix-like DNA-binding domain superfamily/Winged helix DNA-binding domain"/>
    <property type="match status" value="1"/>
</dbReference>
<dbReference type="InterPro" id="IPR048715">
    <property type="entry name" value="CggR_N"/>
</dbReference>
<dbReference type="InterPro" id="IPR037171">
    <property type="entry name" value="NagB/RpiA_transferase-like"/>
</dbReference>
<dbReference type="InterPro" id="IPR051054">
    <property type="entry name" value="SorC_transcr_regulators"/>
</dbReference>
<dbReference type="InterPro" id="IPR007324">
    <property type="entry name" value="Sugar-bd_dom_put"/>
</dbReference>
<dbReference type="InterPro" id="IPR036388">
    <property type="entry name" value="WH-like_DNA-bd_sf"/>
</dbReference>
<dbReference type="InterPro" id="IPR036390">
    <property type="entry name" value="WH_DNA-bd_sf"/>
</dbReference>
<dbReference type="PANTHER" id="PTHR34294:SF5">
    <property type="entry name" value="CENTRAL GLYCOLYTIC GENES REGULATOR"/>
    <property type="match status" value="1"/>
</dbReference>
<dbReference type="PANTHER" id="PTHR34294">
    <property type="entry name" value="TRANSCRIPTIONAL REGULATOR-RELATED"/>
    <property type="match status" value="1"/>
</dbReference>
<dbReference type="Pfam" id="PF21715">
    <property type="entry name" value="CggR_N"/>
    <property type="match status" value="1"/>
</dbReference>
<dbReference type="Pfam" id="PF04198">
    <property type="entry name" value="Sugar-bind"/>
    <property type="match status" value="1"/>
</dbReference>
<dbReference type="SUPFAM" id="SSF100950">
    <property type="entry name" value="NagB/RpiA/CoA transferase-like"/>
    <property type="match status" value="1"/>
</dbReference>
<dbReference type="SUPFAM" id="SSF46785">
    <property type="entry name" value="Winged helix' DNA-binding domain"/>
    <property type="match status" value="1"/>
</dbReference>
<reference key="1">
    <citation type="journal article" date="1992" name="Gene">
        <title>Cloning and sequencing of the genes encoding glyceraldehyde-3-phosphate dehydrogenase, phosphoglycerate kinase and triosephosphate isomerase (gap operon) from mesophilic Bacillus megaterium: comparison with corresponding sequences from thermophilic Bacillus stearothermophilus.</title>
        <authorList>
            <person name="Schlaepfer B.S."/>
            <person name="Zuber H."/>
        </authorList>
    </citation>
    <scope>NUCLEOTIDE SEQUENCE [GENOMIC DNA]</scope>
</reference>
<reference key="2">
    <citation type="journal article" date="2011" name="J. Bacteriol.">
        <title>Genome sequences of the biotechnologically important Bacillus megaterium strains QM B1551 and DSM319.</title>
        <authorList>
            <person name="Eppinger M."/>
            <person name="Bunk B."/>
            <person name="Johns M.A."/>
            <person name="Edirisinghe J.N."/>
            <person name="Kutumbaka K.K."/>
            <person name="Koenig S.S."/>
            <person name="Creasy H.H."/>
            <person name="Rosovitz M.J."/>
            <person name="Riley D.R."/>
            <person name="Daugherty S."/>
            <person name="Martin M."/>
            <person name="Elbourne L.D."/>
            <person name="Paulsen I."/>
            <person name="Biedendieck R."/>
            <person name="Braun C."/>
            <person name="Grayburn S."/>
            <person name="Dhingra S."/>
            <person name="Lukyanchuk V."/>
            <person name="Ball B."/>
            <person name="Ul-Qamar R."/>
            <person name="Seibel J."/>
            <person name="Bremer E."/>
            <person name="Jahn D."/>
            <person name="Ravel J."/>
            <person name="Vary P.S."/>
        </authorList>
    </citation>
    <scope>NUCLEOTIDE SEQUENCE [LARGE SCALE GENOMIC DNA]</scope>
    <source>
        <strain>DSM 319 / IMG 1521</strain>
    </source>
</reference>
<comment type="function">
    <text evidence="1">In the absence of glucose, represses the transcription of the gapA operon, which encodes five key glycolytic enzymes.</text>
</comment>
<comment type="subunit">
    <text evidence="1">Homotetramer.</text>
</comment>
<comment type="similarity">
    <text evidence="3">Belongs to the SorC transcriptional regulatory family.</text>
</comment>
<gene>
    <name type="primary">cggR</name>
    <name type="ordered locus">BMD_5039</name>
</gene>
<proteinExistence type="inferred from homology"/>
<protein>
    <recommendedName>
        <fullName>Central glycolytic genes regulator</fullName>
    </recommendedName>
</protein>
<evidence type="ECO:0000250" key="1"/>
<evidence type="ECO:0000255" key="2"/>
<evidence type="ECO:0000305" key="3"/>
<organism>
    <name type="scientific">Priestia megaterium (strain DSM 319 / IMG 1521)</name>
    <name type="common">Bacillus megaterium</name>
    <dbReference type="NCBI Taxonomy" id="592022"/>
    <lineage>
        <taxon>Bacteria</taxon>
        <taxon>Bacillati</taxon>
        <taxon>Bacillota</taxon>
        <taxon>Bacilli</taxon>
        <taxon>Bacillales</taxon>
        <taxon>Bacillaceae</taxon>
        <taxon>Priestia</taxon>
    </lineage>
</organism>
<accession>P35168</accession>
<accession>D5DNB2</accession>
<sequence length="342" mass="37726">MRSLIEVQRKLLPELLSVMQKRYQILQYIRLMQPIGRRNLAVSLGLTERVLRSEVTFLKEQDLIDIYPSGMTLTNEGELLLAELEEVMKEVSGLRLLETTLKEAFSLSEVVVVSGDSDQSPWVKNEMGRASVSCIKERLVGKKNTVAVTGGTTLAAVAEMMTPDLKHPDVLFVPARGGLGENVQNQANTICAKMAEKSMSHYRLLHVPDQLSDEAYRSIIGEPSIKDMLHLIKSAGMVVHGIGDAMTMAERRKTPQADLEKVKNGHAVGEAFGYYFNHQGEVVHKVKTVGIQLDDLKNNKCVIAVAGGSSKAKAIKAFMQQAHDSILITDEGAAKELVRDFN</sequence>
<feature type="chain" id="PRO_0000062786" description="Central glycolytic genes regulator">
    <location>
        <begin position="1"/>
        <end position="342"/>
    </location>
</feature>
<feature type="DNA-binding region" description="H-T-H motif" evidence="2">
    <location>
        <begin position="37"/>
        <end position="56"/>
    </location>
</feature>
<keyword id="KW-0238">DNA-binding</keyword>
<keyword id="KW-0678">Repressor</keyword>
<keyword id="KW-0804">Transcription</keyword>
<keyword id="KW-0805">Transcription regulation</keyword>
<name>CGGR_PRIM3</name>